<name>UPPP_BUCAT</name>
<evidence type="ECO:0000255" key="1">
    <source>
        <dbReference type="HAMAP-Rule" id="MF_01006"/>
    </source>
</evidence>
<reference key="1">
    <citation type="journal article" date="2009" name="Science">
        <title>The dynamics and time scale of ongoing genomic erosion in symbiotic bacteria.</title>
        <authorList>
            <person name="Moran N.A."/>
            <person name="McLaughlin H.J."/>
            <person name="Sorek R."/>
        </authorList>
    </citation>
    <scope>NUCLEOTIDE SEQUENCE [LARGE SCALE GENOMIC DNA]</scope>
    <source>
        <strain>Tuc7</strain>
    </source>
</reference>
<organism>
    <name type="scientific">Buchnera aphidicola subsp. Acyrthosiphon pisum (strain Tuc7)</name>
    <dbReference type="NCBI Taxonomy" id="561501"/>
    <lineage>
        <taxon>Bacteria</taxon>
        <taxon>Pseudomonadati</taxon>
        <taxon>Pseudomonadota</taxon>
        <taxon>Gammaproteobacteria</taxon>
        <taxon>Enterobacterales</taxon>
        <taxon>Erwiniaceae</taxon>
        <taxon>Buchnera</taxon>
    </lineage>
</organism>
<dbReference type="EC" id="3.6.1.27" evidence="1"/>
<dbReference type="EMBL" id="CP001158">
    <property type="protein sequence ID" value="ACL29889.1"/>
    <property type="molecule type" value="Genomic_DNA"/>
</dbReference>
<dbReference type="RefSeq" id="WP_012619415.1">
    <property type="nucleotide sequence ID" value="NC_011834.1"/>
</dbReference>
<dbReference type="SMR" id="B8D6X4"/>
<dbReference type="KEGG" id="bau:BUAPTUC7_062"/>
<dbReference type="HOGENOM" id="CLU_060296_2_0_6"/>
<dbReference type="GO" id="GO:0005886">
    <property type="term" value="C:plasma membrane"/>
    <property type="evidence" value="ECO:0007669"/>
    <property type="project" value="UniProtKB-SubCell"/>
</dbReference>
<dbReference type="GO" id="GO:0050380">
    <property type="term" value="F:undecaprenyl-diphosphatase activity"/>
    <property type="evidence" value="ECO:0007669"/>
    <property type="project" value="UniProtKB-UniRule"/>
</dbReference>
<dbReference type="GO" id="GO:0071555">
    <property type="term" value="P:cell wall organization"/>
    <property type="evidence" value="ECO:0007669"/>
    <property type="project" value="UniProtKB-KW"/>
</dbReference>
<dbReference type="GO" id="GO:0009252">
    <property type="term" value="P:peptidoglycan biosynthetic process"/>
    <property type="evidence" value="ECO:0007669"/>
    <property type="project" value="UniProtKB-KW"/>
</dbReference>
<dbReference type="GO" id="GO:0008360">
    <property type="term" value="P:regulation of cell shape"/>
    <property type="evidence" value="ECO:0007669"/>
    <property type="project" value="UniProtKB-KW"/>
</dbReference>
<dbReference type="GO" id="GO:0046677">
    <property type="term" value="P:response to antibiotic"/>
    <property type="evidence" value="ECO:0007669"/>
    <property type="project" value="UniProtKB-UniRule"/>
</dbReference>
<dbReference type="HAMAP" id="MF_01006">
    <property type="entry name" value="Undec_diphosphatase"/>
    <property type="match status" value="1"/>
</dbReference>
<dbReference type="InterPro" id="IPR003824">
    <property type="entry name" value="UppP"/>
</dbReference>
<dbReference type="NCBIfam" id="NF001390">
    <property type="entry name" value="PRK00281.1-4"/>
    <property type="match status" value="1"/>
</dbReference>
<dbReference type="NCBIfam" id="TIGR00753">
    <property type="entry name" value="undec_PP_bacA"/>
    <property type="match status" value="1"/>
</dbReference>
<dbReference type="PANTHER" id="PTHR30622">
    <property type="entry name" value="UNDECAPRENYL-DIPHOSPHATASE"/>
    <property type="match status" value="1"/>
</dbReference>
<dbReference type="PANTHER" id="PTHR30622:SF3">
    <property type="entry name" value="UNDECAPRENYL-DIPHOSPHATASE"/>
    <property type="match status" value="1"/>
</dbReference>
<dbReference type="Pfam" id="PF02673">
    <property type="entry name" value="BacA"/>
    <property type="match status" value="1"/>
</dbReference>
<keyword id="KW-0046">Antibiotic resistance</keyword>
<keyword id="KW-1003">Cell membrane</keyword>
<keyword id="KW-0133">Cell shape</keyword>
<keyword id="KW-0961">Cell wall biogenesis/degradation</keyword>
<keyword id="KW-0378">Hydrolase</keyword>
<keyword id="KW-0472">Membrane</keyword>
<keyword id="KW-0573">Peptidoglycan synthesis</keyword>
<keyword id="KW-0812">Transmembrane</keyword>
<keyword id="KW-1133">Transmembrane helix</keyword>
<sequence length="265" mass="30321">MLDLHQIIVSIIIGVIEGITEFLPISSTGHMIIASHWLKIDNENTKILEIFIEFGSALSILYFFHKKILRILKFNINVKKTNTKNLHIILAILPTIFFGLLFYKKIKLLFNTYNVMYALILGGIFLLISEIFKPKKYKTCSINDISLLQSAIIGFFQIFCLYPGFSRSGATIGTAILLGIKRSVAIEFSFIISIPLIMGASFYDFINNMHNFKILDLPIFFIGFMISFIVSILCIKKLLKIINRTSLIFFGIYRFIISGLIYFIN</sequence>
<proteinExistence type="inferred from homology"/>
<comment type="function">
    <text evidence="1">Catalyzes the dephosphorylation of undecaprenyl diphosphate (UPP). Confers resistance to bacitracin.</text>
</comment>
<comment type="catalytic activity">
    <reaction evidence="1">
        <text>di-trans,octa-cis-undecaprenyl diphosphate + H2O = di-trans,octa-cis-undecaprenyl phosphate + phosphate + H(+)</text>
        <dbReference type="Rhea" id="RHEA:28094"/>
        <dbReference type="ChEBI" id="CHEBI:15377"/>
        <dbReference type="ChEBI" id="CHEBI:15378"/>
        <dbReference type="ChEBI" id="CHEBI:43474"/>
        <dbReference type="ChEBI" id="CHEBI:58405"/>
        <dbReference type="ChEBI" id="CHEBI:60392"/>
        <dbReference type="EC" id="3.6.1.27"/>
    </reaction>
</comment>
<comment type="subcellular location">
    <subcellularLocation>
        <location evidence="1">Cell membrane</location>
        <topology evidence="1">Multi-pass membrane protein</topology>
    </subcellularLocation>
</comment>
<comment type="miscellaneous">
    <text>Bacitracin is thought to be involved in the inhibition of peptidoglycan synthesis by sequestering undecaprenyl diphosphate, thereby reducing the pool of lipid carrier available.</text>
</comment>
<comment type="similarity">
    <text evidence="1">Belongs to the UppP family.</text>
</comment>
<feature type="chain" id="PRO_1000148805" description="Undecaprenyl-diphosphatase">
    <location>
        <begin position="1"/>
        <end position="265"/>
    </location>
</feature>
<feature type="transmembrane region" description="Helical" evidence="1">
    <location>
        <begin position="7"/>
        <end position="27"/>
    </location>
</feature>
<feature type="transmembrane region" description="Helical" evidence="1">
    <location>
        <begin position="45"/>
        <end position="65"/>
    </location>
</feature>
<feature type="transmembrane region" description="Helical" evidence="1">
    <location>
        <begin position="86"/>
        <end position="106"/>
    </location>
</feature>
<feature type="transmembrane region" description="Helical" evidence="1">
    <location>
        <begin position="108"/>
        <end position="128"/>
    </location>
</feature>
<feature type="transmembrane region" description="Helical" evidence="1">
    <location>
        <begin position="145"/>
        <end position="165"/>
    </location>
</feature>
<feature type="transmembrane region" description="Helical" evidence="1">
    <location>
        <begin position="186"/>
        <end position="206"/>
    </location>
</feature>
<feature type="transmembrane region" description="Helical" evidence="1">
    <location>
        <begin position="214"/>
        <end position="234"/>
    </location>
</feature>
<feature type="transmembrane region" description="Helical" evidence="1">
    <location>
        <begin position="245"/>
        <end position="265"/>
    </location>
</feature>
<gene>
    <name evidence="1" type="primary">uppP</name>
    <name type="ordered locus">BUAPTUC7_062</name>
</gene>
<protein>
    <recommendedName>
        <fullName evidence="1">Undecaprenyl-diphosphatase</fullName>
        <ecNumber evidence="1">3.6.1.27</ecNumber>
    </recommendedName>
    <alternativeName>
        <fullName evidence="1">Bacitracin resistance protein</fullName>
    </alternativeName>
    <alternativeName>
        <fullName evidence="1">Undecaprenyl pyrophosphate phosphatase</fullName>
    </alternativeName>
</protein>
<accession>B8D6X4</accession>